<comment type="function">
    <text evidence="1">Catalyzes the GTP-dependent ribosomal translocation step during translation elongation. During this step, the ribosome changes from the pre-translocational (PRE) to the post-translocational (POST) state as the newly formed A-site-bound peptidyl-tRNA and P-site-bound deacylated tRNA move to the P and E sites, respectively. Catalyzes the coordinated movement of the two tRNA molecules, the mRNA and conformational changes in the ribosome.</text>
</comment>
<comment type="subcellular location">
    <subcellularLocation>
        <location evidence="1">Cytoplasm</location>
    </subcellularLocation>
</comment>
<comment type="similarity">
    <text evidence="1">Belongs to the TRAFAC class translation factor GTPase superfamily. Classic translation factor GTPase family. EF-G/EF-2 subfamily.</text>
</comment>
<sequence length="704" mass="77808">MPRKTPIERYRNIGISAHIDAGKTTTTERILFYTGVSHKIGEVHDGAATMDWMEQEQERGITITSAATTAFWKGMAGNYPEHRINIIDTPGHVDFTIEVERSMRVLDGACMVYDSVGGVQPQSETVWRQANKYKVPRIAFVNKMDRVGADFFRVQRQIGERLKGVAVPIQIPVGAEEHFQGVVDLVKMKAIVWDDESQGVKFTYEDIPANLVELAHEWREKMVEAAAEASEELLEKYLTDHNSLTEDEIKAALRKRTIANEIVPMLCGSAFKNKGVQAMLDAVIDYLPSPADVPAILGHDLDDKEAERHPSDDEPFSALAFKIMTDPFVGQLIFFRVYSGVVESGDTLLNATKDKKERLGRILQMHANERKEIKEVRAGDIAAAVGLKEATTGDTLCDPGKPIILEKMEFPEPVISQAVEPKTKADQEKMGLALNRLAQEDPSFRVQTDEESGQTIISGMGELHLEIIVDRMKREFGVEATVGKPQVAYRETVRTVAEDVEGKFVKQSGGRGQYGHAVIKLEPNPGKGYEFLDEIKGGVIPREFIPAVNKGIEETLKSGVLAGYPVVDVKVHLTFGSYHDVDSNENAFRMAGSMAFKEAMRRAKPVLLEPMMAVEVETPEDFMGNVMGDLSSRRGIVQGMEDIAGGGGKLVRAEVPLAEMFGYSTSLRSATQGRATYTMEFKHYAETPSNVSEAVINAKQVGRG</sequence>
<dbReference type="EMBL" id="CP000010">
    <property type="protein sequence ID" value="AAU49910.1"/>
    <property type="molecule type" value="Genomic_DNA"/>
</dbReference>
<dbReference type="RefSeq" id="YP_103816.1">
    <property type="nucleotide sequence ID" value="NC_006348.1"/>
</dbReference>
<dbReference type="SMR" id="Q62HK4"/>
<dbReference type="KEGG" id="bma:BMA2252"/>
<dbReference type="PATRIC" id="fig|243160.12.peg.2317"/>
<dbReference type="eggNOG" id="COG0480">
    <property type="taxonomic scope" value="Bacteria"/>
</dbReference>
<dbReference type="HOGENOM" id="CLU_002794_4_1_4"/>
<dbReference type="Proteomes" id="UP000006693">
    <property type="component" value="Chromosome 1"/>
</dbReference>
<dbReference type="GO" id="GO:0005737">
    <property type="term" value="C:cytoplasm"/>
    <property type="evidence" value="ECO:0007669"/>
    <property type="project" value="UniProtKB-SubCell"/>
</dbReference>
<dbReference type="GO" id="GO:0005525">
    <property type="term" value="F:GTP binding"/>
    <property type="evidence" value="ECO:0007669"/>
    <property type="project" value="UniProtKB-UniRule"/>
</dbReference>
<dbReference type="GO" id="GO:0003924">
    <property type="term" value="F:GTPase activity"/>
    <property type="evidence" value="ECO:0007669"/>
    <property type="project" value="InterPro"/>
</dbReference>
<dbReference type="GO" id="GO:0097216">
    <property type="term" value="F:guanosine tetraphosphate binding"/>
    <property type="evidence" value="ECO:0007669"/>
    <property type="project" value="UniProtKB-ARBA"/>
</dbReference>
<dbReference type="GO" id="GO:0003746">
    <property type="term" value="F:translation elongation factor activity"/>
    <property type="evidence" value="ECO:0007669"/>
    <property type="project" value="UniProtKB-UniRule"/>
</dbReference>
<dbReference type="GO" id="GO:0032790">
    <property type="term" value="P:ribosome disassembly"/>
    <property type="evidence" value="ECO:0007669"/>
    <property type="project" value="TreeGrafter"/>
</dbReference>
<dbReference type="CDD" id="cd01886">
    <property type="entry name" value="EF-G"/>
    <property type="match status" value="1"/>
</dbReference>
<dbReference type="CDD" id="cd16262">
    <property type="entry name" value="EFG_III"/>
    <property type="match status" value="1"/>
</dbReference>
<dbReference type="CDD" id="cd01434">
    <property type="entry name" value="EFG_mtEFG1_IV"/>
    <property type="match status" value="1"/>
</dbReference>
<dbReference type="CDD" id="cd03713">
    <property type="entry name" value="EFG_mtEFG_C"/>
    <property type="match status" value="1"/>
</dbReference>
<dbReference type="CDD" id="cd04088">
    <property type="entry name" value="EFG_mtEFG_II"/>
    <property type="match status" value="1"/>
</dbReference>
<dbReference type="FunFam" id="2.40.30.10:FF:000006">
    <property type="entry name" value="Elongation factor G"/>
    <property type="match status" value="1"/>
</dbReference>
<dbReference type="FunFam" id="3.30.230.10:FF:000003">
    <property type="entry name" value="Elongation factor G"/>
    <property type="match status" value="1"/>
</dbReference>
<dbReference type="FunFam" id="3.30.70.240:FF:000001">
    <property type="entry name" value="Elongation factor G"/>
    <property type="match status" value="1"/>
</dbReference>
<dbReference type="FunFam" id="3.30.70.870:FF:000001">
    <property type="entry name" value="Elongation factor G"/>
    <property type="match status" value="1"/>
</dbReference>
<dbReference type="FunFam" id="3.40.50.300:FF:000029">
    <property type="entry name" value="Elongation factor G"/>
    <property type="match status" value="1"/>
</dbReference>
<dbReference type="Gene3D" id="3.30.230.10">
    <property type="match status" value="1"/>
</dbReference>
<dbReference type="Gene3D" id="3.30.70.240">
    <property type="match status" value="1"/>
</dbReference>
<dbReference type="Gene3D" id="3.30.70.870">
    <property type="entry name" value="Elongation Factor G (Translational Gtpase), domain 3"/>
    <property type="match status" value="1"/>
</dbReference>
<dbReference type="Gene3D" id="3.40.50.300">
    <property type="entry name" value="P-loop containing nucleotide triphosphate hydrolases"/>
    <property type="match status" value="1"/>
</dbReference>
<dbReference type="Gene3D" id="2.40.30.10">
    <property type="entry name" value="Translation factors"/>
    <property type="match status" value="1"/>
</dbReference>
<dbReference type="HAMAP" id="MF_00054_B">
    <property type="entry name" value="EF_G_EF_2_B"/>
    <property type="match status" value="1"/>
</dbReference>
<dbReference type="InterPro" id="IPR041095">
    <property type="entry name" value="EFG_II"/>
</dbReference>
<dbReference type="InterPro" id="IPR009022">
    <property type="entry name" value="EFG_III"/>
</dbReference>
<dbReference type="InterPro" id="IPR035647">
    <property type="entry name" value="EFG_III/V"/>
</dbReference>
<dbReference type="InterPro" id="IPR047872">
    <property type="entry name" value="EFG_IV"/>
</dbReference>
<dbReference type="InterPro" id="IPR035649">
    <property type="entry name" value="EFG_V"/>
</dbReference>
<dbReference type="InterPro" id="IPR000640">
    <property type="entry name" value="EFG_V-like"/>
</dbReference>
<dbReference type="InterPro" id="IPR004161">
    <property type="entry name" value="EFTu-like_2"/>
</dbReference>
<dbReference type="InterPro" id="IPR031157">
    <property type="entry name" value="G_TR_CS"/>
</dbReference>
<dbReference type="InterPro" id="IPR027417">
    <property type="entry name" value="P-loop_NTPase"/>
</dbReference>
<dbReference type="InterPro" id="IPR020568">
    <property type="entry name" value="Ribosomal_Su5_D2-typ_SF"/>
</dbReference>
<dbReference type="InterPro" id="IPR014721">
    <property type="entry name" value="Ribsml_uS5_D2-typ_fold_subgr"/>
</dbReference>
<dbReference type="InterPro" id="IPR005225">
    <property type="entry name" value="Small_GTP-bd"/>
</dbReference>
<dbReference type="InterPro" id="IPR000795">
    <property type="entry name" value="T_Tr_GTP-bd_dom"/>
</dbReference>
<dbReference type="InterPro" id="IPR009000">
    <property type="entry name" value="Transl_B-barrel_sf"/>
</dbReference>
<dbReference type="InterPro" id="IPR004540">
    <property type="entry name" value="Transl_elong_EFG/EF2"/>
</dbReference>
<dbReference type="InterPro" id="IPR005517">
    <property type="entry name" value="Transl_elong_EFG/EF2_IV"/>
</dbReference>
<dbReference type="NCBIfam" id="TIGR00484">
    <property type="entry name" value="EF-G"/>
    <property type="match status" value="1"/>
</dbReference>
<dbReference type="NCBIfam" id="NF009381">
    <property type="entry name" value="PRK12740.1-5"/>
    <property type="match status" value="1"/>
</dbReference>
<dbReference type="NCBIfam" id="TIGR00231">
    <property type="entry name" value="small_GTP"/>
    <property type="match status" value="1"/>
</dbReference>
<dbReference type="PANTHER" id="PTHR43261:SF1">
    <property type="entry name" value="RIBOSOME-RELEASING FACTOR 2, MITOCHONDRIAL"/>
    <property type="match status" value="1"/>
</dbReference>
<dbReference type="PANTHER" id="PTHR43261">
    <property type="entry name" value="TRANSLATION ELONGATION FACTOR G-RELATED"/>
    <property type="match status" value="1"/>
</dbReference>
<dbReference type="Pfam" id="PF00679">
    <property type="entry name" value="EFG_C"/>
    <property type="match status" value="1"/>
</dbReference>
<dbReference type="Pfam" id="PF14492">
    <property type="entry name" value="EFG_III"/>
    <property type="match status" value="1"/>
</dbReference>
<dbReference type="Pfam" id="PF03764">
    <property type="entry name" value="EFG_IV"/>
    <property type="match status" value="1"/>
</dbReference>
<dbReference type="Pfam" id="PF00009">
    <property type="entry name" value="GTP_EFTU"/>
    <property type="match status" value="1"/>
</dbReference>
<dbReference type="Pfam" id="PF03144">
    <property type="entry name" value="GTP_EFTU_D2"/>
    <property type="match status" value="1"/>
</dbReference>
<dbReference type="PRINTS" id="PR00315">
    <property type="entry name" value="ELONGATNFCT"/>
</dbReference>
<dbReference type="SMART" id="SM00838">
    <property type="entry name" value="EFG_C"/>
    <property type="match status" value="1"/>
</dbReference>
<dbReference type="SMART" id="SM00889">
    <property type="entry name" value="EFG_IV"/>
    <property type="match status" value="1"/>
</dbReference>
<dbReference type="SUPFAM" id="SSF54980">
    <property type="entry name" value="EF-G C-terminal domain-like"/>
    <property type="match status" value="2"/>
</dbReference>
<dbReference type="SUPFAM" id="SSF52540">
    <property type="entry name" value="P-loop containing nucleoside triphosphate hydrolases"/>
    <property type="match status" value="1"/>
</dbReference>
<dbReference type="SUPFAM" id="SSF54211">
    <property type="entry name" value="Ribosomal protein S5 domain 2-like"/>
    <property type="match status" value="1"/>
</dbReference>
<dbReference type="SUPFAM" id="SSF50447">
    <property type="entry name" value="Translation proteins"/>
    <property type="match status" value="1"/>
</dbReference>
<dbReference type="PROSITE" id="PS00301">
    <property type="entry name" value="G_TR_1"/>
    <property type="match status" value="1"/>
</dbReference>
<dbReference type="PROSITE" id="PS51722">
    <property type="entry name" value="G_TR_2"/>
    <property type="match status" value="1"/>
</dbReference>
<evidence type="ECO:0000255" key="1">
    <source>
        <dbReference type="HAMAP-Rule" id="MF_00054"/>
    </source>
</evidence>
<protein>
    <recommendedName>
        <fullName evidence="1">Elongation factor G 1</fullName>
        <shortName evidence="1">EF-G 1</shortName>
    </recommendedName>
</protein>
<accession>Q62HK4</accession>
<proteinExistence type="inferred from homology"/>
<name>EFG1_BURMA</name>
<feature type="chain" id="PRO_0000091093" description="Elongation factor G 1">
    <location>
        <begin position="1"/>
        <end position="704"/>
    </location>
</feature>
<feature type="domain" description="tr-type G">
    <location>
        <begin position="8"/>
        <end position="291"/>
    </location>
</feature>
<feature type="binding site" evidence="1">
    <location>
        <begin position="17"/>
        <end position="24"/>
    </location>
    <ligand>
        <name>GTP</name>
        <dbReference type="ChEBI" id="CHEBI:37565"/>
    </ligand>
</feature>
<feature type="binding site" evidence="1">
    <location>
        <begin position="88"/>
        <end position="92"/>
    </location>
    <ligand>
        <name>GTP</name>
        <dbReference type="ChEBI" id="CHEBI:37565"/>
    </ligand>
</feature>
<feature type="binding site" evidence="1">
    <location>
        <begin position="142"/>
        <end position="145"/>
    </location>
    <ligand>
        <name>GTP</name>
        <dbReference type="ChEBI" id="CHEBI:37565"/>
    </ligand>
</feature>
<gene>
    <name evidence="1" type="primary">fusA1</name>
    <name type="synonym">fusA-1</name>
    <name type="ordered locus">BMA2252</name>
</gene>
<keyword id="KW-0963">Cytoplasm</keyword>
<keyword id="KW-0251">Elongation factor</keyword>
<keyword id="KW-0342">GTP-binding</keyword>
<keyword id="KW-0547">Nucleotide-binding</keyword>
<keyword id="KW-0648">Protein biosynthesis</keyword>
<keyword id="KW-1185">Reference proteome</keyword>
<organism>
    <name type="scientific">Burkholderia mallei (strain ATCC 23344)</name>
    <dbReference type="NCBI Taxonomy" id="243160"/>
    <lineage>
        <taxon>Bacteria</taxon>
        <taxon>Pseudomonadati</taxon>
        <taxon>Pseudomonadota</taxon>
        <taxon>Betaproteobacteria</taxon>
        <taxon>Burkholderiales</taxon>
        <taxon>Burkholderiaceae</taxon>
        <taxon>Burkholderia</taxon>
        <taxon>pseudomallei group</taxon>
    </lineage>
</organism>
<reference key="1">
    <citation type="journal article" date="2004" name="Proc. Natl. Acad. Sci. U.S.A.">
        <title>Structural flexibility in the Burkholderia mallei genome.</title>
        <authorList>
            <person name="Nierman W.C."/>
            <person name="DeShazer D."/>
            <person name="Kim H.S."/>
            <person name="Tettelin H."/>
            <person name="Nelson K.E."/>
            <person name="Feldblyum T.V."/>
            <person name="Ulrich R.L."/>
            <person name="Ronning C.M."/>
            <person name="Brinkac L.M."/>
            <person name="Daugherty S.C."/>
            <person name="Davidsen T.D."/>
            <person name="DeBoy R.T."/>
            <person name="Dimitrov G."/>
            <person name="Dodson R.J."/>
            <person name="Durkin A.S."/>
            <person name="Gwinn M.L."/>
            <person name="Haft D.H."/>
            <person name="Khouri H.M."/>
            <person name="Kolonay J.F."/>
            <person name="Madupu R."/>
            <person name="Mohammoud Y."/>
            <person name="Nelson W.C."/>
            <person name="Radune D."/>
            <person name="Romero C.M."/>
            <person name="Sarria S."/>
            <person name="Selengut J."/>
            <person name="Shamblin C."/>
            <person name="Sullivan S.A."/>
            <person name="White O."/>
            <person name="Yu Y."/>
            <person name="Zafar N."/>
            <person name="Zhou L."/>
            <person name="Fraser C.M."/>
        </authorList>
    </citation>
    <scope>NUCLEOTIDE SEQUENCE [LARGE SCALE GENOMIC DNA]</scope>
    <source>
        <strain>ATCC 23344</strain>
    </source>
</reference>